<feature type="chain" id="PRO_0000321989" description="C4-dicarboxylate transport protein 1">
    <location>
        <begin position="1"/>
        <end position="452"/>
    </location>
</feature>
<feature type="transmembrane region" description="Helical" evidence="1">
    <location>
        <begin position="18"/>
        <end position="38"/>
    </location>
</feature>
<feature type="transmembrane region" description="Helical" evidence="1">
    <location>
        <begin position="51"/>
        <end position="71"/>
    </location>
</feature>
<feature type="transmembrane region" description="Helical" evidence="1">
    <location>
        <begin position="83"/>
        <end position="103"/>
    </location>
</feature>
<feature type="transmembrane region" description="Helical" evidence="1">
    <location>
        <begin position="151"/>
        <end position="171"/>
    </location>
</feature>
<feature type="transmembrane region" description="Helical" evidence="1">
    <location>
        <begin position="191"/>
        <end position="211"/>
    </location>
</feature>
<feature type="transmembrane region" description="Helical" evidence="1">
    <location>
        <begin position="229"/>
        <end position="249"/>
    </location>
</feature>
<feature type="transmembrane region" description="Helical" evidence="1">
    <location>
        <begin position="304"/>
        <end position="324"/>
    </location>
</feature>
<feature type="transmembrane region" description="Helical" evidence="1">
    <location>
        <begin position="337"/>
        <end position="357"/>
    </location>
</feature>
<feature type="transmembrane region" description="Helical" evidence="1">
    <location>
        <begin position="359"/>
        <end position="379"/>
    </location>
</feature>
<feature type="region of interest" description="Disordered" evidence="2">
    <location>
        <begin position="426"/>
        <end position="452"/>
    </location>
</feature>
<feature type="compositionally biased region" description="Basic and acidic residues" evidence="2">
    <location>
        <begin position="431"/>
        <end position="442"/>
    </location>
</feature>
<accession>A1VKX1</accession>
<proteinExistence type="inferred from homology"/>
<organism>
    <name type="scientific">Polaromonas naphthalenivorans (strain CJ2)</name>
    <dbReference type="NCBI Taxonomy" id="365044"/>
    <lineage>
        <taxon>Bacteria</taxon>
        <taxon>Pseudomonadati</taxon>
        <taxon>Pseudomonadota</taxon>
        <taxon>Betaproteobacteria</taxon>
        <taxon>Burkholderiales</taxon>
        <taxon>Comamonadaceae</taxon>
        <taxon>Polaromonas</taxon>
    </lineage>
</organism>
<name>DCTA1_POLNA</name>
<protein>
    <recommendedName>
        <fullName evidence="1">C4-dicarboxylate transport protein 1</fullName>
    </recommendedName>
</protein>
<evidence type="ECO:0000255" key="1">
    <source>
        <dbReference type="HAMAP-Rule" id="MF_01300"/>
    </source>
</evidence>
<evidence type="ECO:0000256" key="2">
    <source>
        <dbReference type="SAM" id="MobiDB-lite"/>
    </source>
</evidence>
<sequence length="452" mass="48149">MTTSAPTEKLPLYRSLYFQVVCAVIAGVALGYFYPSVGESMKPLGDGFIKLIKMMIAPIIFCTVVVGIAGMEDMKKVGKTGGLALLYFEVVSTFALIIGLLLVNLFQPGAGMNIDAATLDTKSIAAYTGPGKMVSTTDFILNVIPTAFVDAFAKGEILQVLLLAILFGFALHRFGGRGTLVFDMIEKSSHVLFTIVGFIMKVAPIGAFGAMAFTIGKYGVGSLFSLGKLMGAFYLTCLIFIFGVLGAIARIHGFSVWKFIKYIKEELLIVLGTSSSESVLPRMMEKMENLGAKKTTVGLVIPTGYSFNLDGTSIYLTMAAVFIAQATNTPMTLMQEITLLGVLLLTSKGAAGVTGSGFIVLAATLSAVGTVPVAGLALILGIDRFMSEARALTNLIGNGVATLVVAKWTNELDMERLQAGLNNETWEEAQEPERVLDKKTEHMPVSAMSDAG</sequence>
<comment type="function">
    <text evidence="1">Responsible for the transport of dicarboxylates such as succinate, fumarate, and malate from the periplasm across the membrane.</text>
</comment>
<comment type="subcellular location">
    <subcellularLocation>
        <location evidence="1">Cell inner membrane</location>
        <topology evidence="1">Multi-pass membrane protein</topology>
    </subcellularLocation>
</comment>
<comment type="similarity">
    <text evidence="1">Belongs to the dicarboxylate/amino acid:cation symporter (DAACS) (TC 2.A.23) family.</text>
</comment>
<gene>
    <name evidence="1" type="primary">dctA1</name>
    <name type="ordered locus">Pnap_0982</name>
</gene>
<dbReference type="EMBL" id="CP000529">
    <property type="protein sequence ID" value="ABM36299.1"/>
    <property type="molecule type" value="Genomic_DNA"/>
</dbReference>
<dbReference type="RefSeq" id="WP_011800393.1">
    <property type="nucleotide sequence ID" value="NC_008781.1"/>
</dbReference>
<dbReference type="SMR" id="A1VKX1"/>
<dbReference type="STRING" id="365044.Pnap_0982"/>
<dbReference type="KEGG" id="pna:Pnap_0982"/>
<dbReference type="eggNOG" id="COG1301">
    <property type="taxonomic scope" value="Bacteria"/>
</dbReference>
<dbReference type="HOGENOM" id="CLU_019375_7_0_4"/>
<dbReference type="OrthoDB" id="9766690at2"/>
<dbReference type="Proteomes" id="UP000000644">
    <property type="component" value="Chromosome"/>
</dbReference>
<dbReference type="GO" id="GO:0005886">
    <property type="term" value="C:plasma membrane"/>
    <property type="evidence" value="ECO:0007669"/>
    <property type="project" value="UniProtKB-SubCell"/>
</dbReference>
<dbReference type="GO" id="GO:0015138">
    <property type="term" value="F:fumarate transmembrane transporter activity"/>
    <property type="evidence" value="ECO:0007669"/>
    <property type="project" value="TreeGrafter"/>
</dbReference>
<dbReference type="GO" id="GO:0015366">
    <property type="term" value="F:malate:proton symporter activity"/>
    <property type="evidence" value="ECO:0007669"/>
    <property type="project" value="TreeGrafter"/>
</dbReference>
<dbReference type="GO" id="GO:0015141">
    <property type="term" value="F:succinate transmembrane transporter activity"/>
    <property type="evidence" value="ECO:0007669"/>
    <property type="project" value="TreeGrafter"/>
</dbReference>
<dbReference type="GO" id="GO:0070778">
    <property type="term" value="P:L-aspartate transmembrane transport"/>
    <property type="evidence" value="ECO:0007669"/>
    <property type="project" value="TreeGrafter"/>
</dbReference>
<dbReference type="FunFam" id="1.10.3860.10:FF:000001">
    <property type="entry name" value="C4-dicarboxylate transport protein"/>
    <property type="match status" value="1"/>
</dbReference>
<dbReference type="Gene3D" id="1.10.3860.10">
    <property type="entry name" value="Sodium:dicarboxylate symporter"/>
    <property type="match status" value="1"/>
</dbReference>
<dbReference type="HAMAP" id="MF_01300">
    <property type="entry name" value="C4_dicarb_transport"/>
    <property type="match status" value="1"/>
</dbReference>
<dbReference type="InterPro" id="IPR023954">
    <property type="entry name" value="C4_dicarb_transport"/>
</dbReference>
<dbReference type="InterPro" id="IPR001991">
    <property type="entry name" value="Na-dicarboxylate_symporter"/>
</dbReference>
<dbReference type="InterPro" id="IPR018107">
    <property type="entry name" value="Na-dicarboxylate_symporter_CS"/>
</dbReference>
<dbReference type="InterPro" id="IPR036458">
    <property type="entry name" value="Na:dicarbo_symporter_sf"/>
</dbReference>
<dbReference type="NCBIfam" id="NF002461">
    <property type="entry name" value="PRK01663.1"/>
    <property type="match status" value="1"/>
</dbReference>
<dbReference type="NCBIfam" id="NF009587">
    <property type="entry name" value="PRK13027.1"/>
    <property type="match status" value="1"/>
</dbReference>
<dbReference type="PANTHER" id="PTHR42865:SF1">
    <property type="entry name" value="AEROBIC C4-DICARBOXYLATE TRANSPORT PROTEIN"/>
    <property type="match status" value="1"/>
</dbReference>
<dbReference type="PANTHER" id="PTHR42865">
    <property type="entry name" value="PROTON/GLUTAMATE-ASPARTATE SYMPORTER"/>
    <property type="match status" value="1"/>
</dbReference>
<dbReference type="Pfam" id="PF00375">
    <property type="entry name" value="SDF"/>
    <property type="match status" value="1"/>
</dbReference>
<dbReference type="PRINTS" id="PR00173">
    <property type="entry name" value="EDTRNSPORT"/>
</dbReference>
<dbReference type="SUPFAM" id="SSF118215">
    <property type="entry name" value="Proton glutamate symport protein"/>
    <property type="match status" value="1"/>
</dbReference>
<dbReference type="PROSITE" id="PS00713">
    <property type="entry name" value="NA_DICARBOXYL_SYMP_1"/>
    <property type="match status" value="1"/>
</dbReference>
<dbReference type="PROSITE" id="PS00714">
    <property type="entry name" value="NA_DICARBOXYL_SYMP_2"/>
    <property type="match status" value="1"/>
</dbReference>
<keyword id="KW-0997">Cell inner membrane</keyword>
<keyword id="KW-1003">Cell membrane</keyword>
<keyword id="KW-0472">Membrane</keyword>
<keyword id="KW-1185">Reference proteome</keyword>
<keyword id="KW-0769">Symport</keyword>
<keyword id="KW-0812">Transmembrane</keyword>
<keyword id="KW-1133">Transmembrane helix</keyword>
<keyword id="KW-0813">Transport</keyword>
<reference key="1">
    <citation type="journal article" date="2009" name="Environ. Microbiol.">
        <title>The genome of Polaromonas naphthalenivorans strain CJ2, isolated from coal tar-contaminated sediment, reveals physiological and metabolic versatility and evolution through extensive horizontal gene transfer.</title>
        <authorList>
            <person name="Yagi J.M."/>
            <person name="Sims D."/>
            <person name="Brettin T."/>
            <person name="Bruce D."/>
            <person name="Madsen E.L."/>
        </authorList>
    </citation>
    <scope>NUCLEOTIDE SEQUENCE [LARGE SCALE GENOMIC DNA]</scope>
    <source>
        <strain>CJ2</strain>
    </source>
</reference>